<keyword id="KW-1185">Reference proteome</keyword>
<keyword id="KW-0687">Ribonucleoprotein</keyword>
<keyword id="KW-0689">Ribosomal protein</keyword>
<keyword id="KW-0694">RNA-binding</keyword>
<keyword id="KW-0699">rRNA-binding</keyword>
<sequence>MNQERLYKVLLGPVISEKAAMAAEIANQAVFKVVSDASKSEIKAAVEKLFNVSVEGVRVLNVKGKTKRTRYGMGRRSDWKKAYVTLAEGSEIDFESGE</sequence>
<accession>C5BQ63</accession>
<reference key="1">
    <citation type="journal article" date="2009" name="PLoS ONE">
        <title>The complete genome of Teredinibacter turnerae T7901: an intracellular endosymbiont of marine wood-boring bivalves (shipworms).</title>
        <authorList>
            <person name="Yang J.C."/>
            <person name="Madupu R."/>
            <person name="Durkin A.S."/>
            <person name="Ekborg N.A."/>
            <person name="Pedamallu C.S."/>
            <person name="Hostetler J.B."/>
            <person name="Radune D."/>
            <person name="Toms B.S."/>
            <person name="Henrissat B."/>
            <person name="Coutinho P.M."/>
            <person name="Schwarz S."/>
            <person name="Field L."/>
            <person name="Trindade-Silva A.E."/>
            <person name="Soares C.A.G."/>
            <person name="Elshahawi S."/>
            <person name="Hanora A."/>
            <person name="Schmidt E.W."/>
            <person name="Haygood M.G."/>
            <person name="Posfai J."/>
            <person name="Benner J."/>
            <person name="Madinger C."/>
            <person name="Nove J."/>
            <person name="Anton B."/>
            <person name="Chaudhary K."/>
            <person name="Foster J."/>
            <person name="Holman A."/>
            <person name="Kumar S."/>
            <person name="Lessard P.A."/>
            <person name="Luyten Y.A."/>
            <person name="Slatko B."/>
            <person name="Wood N."/>
            <person name="Wu B."/>
            <person name="Teplitski M."/>
            <person name="Mougous J.D."/>
            <person name="Ward N."/>
            <person name="Eisen J.A."/>
            <person name="Badger J.H."/>
            <person name="Distel D.L."/>
        </authorList>
    </citation>
    <scope>NUCLEOTIDE SEQUENCE [LARGE SCALE GENOMIC DNA]</scope>
    <source>
        <strain>ATCC 39867 / T7901</strain>
    </source>
</reference>
<comment type="function">
    <text evidence="1">One of the early assembly proteins it binds 23S rRNA. One of the proteins that surrounds the polypeptide exit tunnel on the outside of the ribosome. Forms the main docking site for trigger factor binding to the ribosome.</text>
</comment>
<comment type="subunit">
    <text evidence="1">Part of the 50S ribosomal subunit. Contacts protein L29, and trigger factor when it is bound to the ribosome.</text>
</comment>
<comment type="similarity">
    <text evidence="1">Belongs to the universal ribosomal protein uL23 family.</text>
</comment>
<protein>
    <recommendedName>
        <fullName evidence="1">Large ribosomal subunit protein uL23</fullName>
    </recommendedName>
    <alternativeName>
        <fullName evidence="2">50S ribosomal protein L23</fullName>
    </alternativeName>
</protein>
<organism>
    <name type="scientific">Teredinibacter turnerae (strain ATCC 39867 / T7901)</name>
    <dbReference type="NCBI Taxonomy" id="377629"/>
    <lineage>
        <taxon>Bacteria</taxon>
        <taxon>Pseudomonadati</taxon>
        <taxon>Pseudomonadota</taxon>
        <taxon>Gammaproteobacteria</taxon>
        <taxon>Cellvibrionales</taxon>
        <taxon>Cellvibrionaceae</taxon>
        <taxon>Teredinibacter</taxon>
    </lineage>
</organism>
<evidence type="ECO:0000255" key="1">
    <source>
        <dbReference type="HAMAP-Rule" id="MF_01369"/>
    </source>
</evidence>
<evidence type="ECO:0000305" key="2"/>
<dbReference type="EMBL" id="CP001614">
    <property type="protein sequence ID" value="ACR13209.1"/>
    <property type="molecule type" value="Genomic_DNA"/>
</dbReference>
<dbReference type="RefSeq" id="WP_015819322.1">
    <property type="nucleotide sequence ID" value="NC_012997.1"/>
</dbReference>
<dbReference type="SMR" id="C5BQ63"/>
<dbReference type="STRING" id="377629.TERTU_0910"/>
<dbReference type="GeneID" id="58408684"/>
<dbReference type="GeneID" id="93857741"/>
<dbReference type="KEGG" id="ttu:TERTU_0910"/>
<dbReference type="eggNOG" id="COG0089">
    <property type="taxonomic scope" value="Bacteria"/>
</dbReference>
<dbReference type="HOGENOM" id="CLU_037562_3_1_6"/>
<dbReference type="OrthoDB" id="9793353at2"/>
<dbReference type="Proteomes" id="UP000009080">
    <property type="component" value="Chromosome"/>
</dbReference>
<dbReference type="GO" id="GO:1990904">
    <property type="term" value="C:ribonucleoprotein complex"/>
    <property type="evidence" value="ECO:0007669"/>
    <property type="project" value="UniProtKB-KW"/>
</dbReference>
<dbReference type="GO" id="GO:0005840">
    <property type="term" value="C:ribosome"/>
    <property type="evidence" value="ECO:0007669"/>
    <property type="project" value="UniProtKB-KW"/>
</dbReference>
<dbReference type="GO" id="GO:0019843">
    <property type="term" value="F:rRNA binding"/>
    <property type="evidence" value="ECO:0007669"/>
    <property type="project" value="UniProtKB-UniRule"/>
</dbReference>
<dbReference type="GO" id="GO:0003735">
    <property type="term" value="F:structural constituent of ribosome"/>
    <property type="evidence" value="ECO:0007669"/>
    <property type="project" value="InterPro"/>
</dbReference>
<dbReference type="GO" id="GO:0006412">
    <property type="term" value="P:translation"/>
    <property type="evidence" value="ECO:0007669"/>
    <property type="project" value="UniProtKB-UniRule"/>
</dbReference>
<dbReference type="FunFam" id="3.30.70.330:FF:000001">
    <property type="entry name" value="50S ribosomal protein L23"/>
    <property type="match status" value="1"/>
</dbReference>
<dbReference type="Gene3D" id="3.30.70.330">
    <property type="match status" value="1"/>
</dbReference>
<dbReference type="HAMAP" id="MF_01369_B">
    <property type="entry name" value="Ribosomal_uL23_B"/>
    <property type="match status" value="1"/>
</dbReference>
<dbReference type="InterPro" id="IPR012677">
    <property type="entry name" value="Nucleotide-bd_a/b_plait_sf"/>
</dbReference>
<dbReference type="InterPro" id="IPR013025">
    <property type="entry name" value="Ribosomal_uL23-like"/>
</dbReference>
<dbReference type="InterPro" id="IPR012678">
    <property type="entry name" value="Ribosomal_uL23/eL15/eS24_sf"/>
</dbReference>
<dbReference type="NCBIfam" id="NF004358">
    <property type="entry name" value="PRK05738.1-1"/>
    <property type="match status" value="1"/>
</dbReference>
<dbReference type="NCBIfam" id="NF004359">
    <property type="entry name" value="PRK05738.1-3"/>
    <property type="match status" value="1"/>
</dbReference>
<dbReference type="NCBIfam" id="NF004363">
    <property type="entry name" value="PRK05738.2-4"/>
    <property type="match status" value="1"/>
</dbReference>
<dbReference type="NCBIfam" id="NF004366">
    <property type="entry name" value="PRK05738.3-2"/>
    <property type="match status" value="1"/>
</dbReference>
<dbReference type="PANTHER" id="PTHR11620">
    <property type="entry name" value="60S RIBOSOMAL PROTEIN L23A"/>
    <property type="match status" value="1"/>
</dbReference>
<dbReference type="Pfam" id="PF00276">
    <property type="entry name" value="Ribosomal_L23"/>
    <property type="match status" value="1"/>
</dbReference>
<dbReference type="SUPFAM" id="SSF54189">
    <property type="entry name" value="Ribosomal proteins S24e, L23 and L15e"/>
    <property type="match status" value="1"/>
</dbReference>
<gene>
    <name evidence="1" type="primary">rplW</name>
    <name type="ordered locus">TERTU_0910</name>
</gene>
<feature type="chain" id="PRO_1000215046" description="Large ribosomal subunit protein uL23">
    <location>
        <begin position="1"/>
        <end position="98"/>
    </location>
</feature>
<proteinExistence type="inferred from homology"/>
<name>RL23_TERTT</name>